<sequence length="244" mass="27973">MKFIKAKGIVLKDVNFEESSKILTIFTSELGKIQALSKNCRRTLSPLGAVSQPLIYSEFVFTKTKEIYSISSASVIESFFDITQNVDLTIYSSYLIELVDSFIQIEQKNEDILRLLLNSLYMLKKGADPETVCRIFEIKMLIFTGFFPQFTQCVKCQKSNLSRIFFSFKNAGVVCAECKEENDMEISLEVVEKILIIAATDLKKLSKIRISKNLNNVLKTLMTTYIKLVLQKDVKILDFFKFIK</sequence>
<evidence type="ECO:0000255" key="1">
    <source>
        <dbReference type="HAMAP-Rule" id="MF_00201"/>
    </source>
</evidence>
<keyword id="KW-0227">DNA damage</keyword>
<keyword id="KW-0233">DNA recombination</keyword>
<keyword id="KW-0234">DNA repair</keyword>
<organism>
    <name type="scientific">Caldicellulosiruptor saccharolyticus (strain ATCC 43494 / DSM 8903 / Tp8T 6331)</name>
    <dbReference type="NCBI Taxonomy" id="351627"/>
    <lineage>
        <taxon>Bacteria</taxon>
        <taxon>Bacillati</taxon>
        <taxon>Bacillota</taxon>
        <taxon>Bacillota incertae sedis</taxon>
        <taxon>Caldicellulosiruptorales</taxon>
        <taxon>Caldicellulosiruptoraceae</taxon>
        <taxon>Caldicellulosiruptor</taxon>
    </lineage>
</organism>
<protein>
    <recommendedName>
        <fullName evidence="1">DNA repair protein RecO</fullName>
    </recommendedName>
    <alternativeName>
        <fullName evidence="1">Recombination protein O</fullName>
    </alternativeName>
</protein>
<feature type="chain" id="PRO_1000012125" description="DNA repair protein RecO">
    <location>
        <begin position="1"/>
        <end position="244"/>
    </location>
</feature>
<accession>A4XKV7</accession>
<dbReference type="EMBL" id="CP000679">
    <property type="protein sequence ID" value="ABP67542.1"/>
    <property type="molecule type" value="Genomic_DNA"/>
</dbReference>
<dbReference type="RefSeq" id="WP_011917478.1">
    <property type="nucleotide sequence ID" value="NC_009437.1"/>
</dbReference>
<dbReference type="SMR" id="A4XKV7"/>
<dbReference type="STRING" id="351627.Csac_1957"/>
<dbReference type="KEGG" id="csc:Csac_1957"/>
<dbReference type="eggNOG" id="COG1381">
    <property type="taxonomic scope" value="Bacteria"/>
</dbReference>
<dbReference type="HOGENOM" id="CLU_066632_3_0_9"/>
<dbReference type="OrthoDB" id="9797083at2"/>
<dbReference type="Proteomes" id="UP000000256">
    <property type="component" value="Chromosome"/>
</dbReference>
<dbReference type="GO" id="GO:0043590">
    <property type="term" value="C:bacterial nucleoid"/>
    <property type="evidence" value="ECO:0007669"/>
    <property type="project" value="TreeGrafter"/>
</dbReference>
<dbReference type="GO" id="GO:0006310">
    <property type="term" value="P:DNA recombination"/>
    <property type="evidence" value="ECO:0007669"/>
    <property type="project" value="UniProtKB-UniRule"/>
</dbReference>
<dbReference type="GO" id="GO:0006302">
    <property type="term" value="P:double-strand break repair"/>
    <property type="evidence" value="ECO:0007669"/>
    <property type="project" value="TreeGrafter"/>
</dbReference>
<dbReference type="Gene3D" id="2.40.50.140">
    <property type="entry name" value="Nucleic acid-binding proteins"/>
    <property type="match status" value="1"/>
</dbReference>
<dbReference type="Gene3D" id="1.20.1440.120">
    <property type="entry name" value="Recombination protein O, C-terminal domain"/>
    <property type="match status" value="1"/>
</dbReference>
<dbReference type="HAMAP" id="MF_00201">
    <property type="entry name" value="RecO"/>
    <property type="match status" value="1"/>
</dbReference>
<dbReference type="InterPro" id="IPR037278">
    <property type="entry name" value="ARFGAP/RecO"/>
</dbReference>
<dbReference type="InterPro" id="IPR022572">
    <property type="entry name" value="DNA_rep/recomb_RecO_N"/>
</dbReference>
<dbReference type="InterPro" id="IPR012340">
    <property type="entry name" value="NA-bd_OB-fold"/>
</dbReference>
<dbReference type="InterPro" id="IPR003717">
    <property type="entry name" value="RecO"/>
</dbReference>
<dbReference type="InterPro" id="IPR042242">
    <property type="entry name" value="RecO_C"/>
</dbReference>
<dbReference type="NCBIfam" id="TIGR00613">
    <property type="entry name" value="reco"/>
    <property type="match status" value="1"/>
</dbReference>
<dbReference type="PANTHER" id="PTHR33991">
    <property type="entry name" value="DNA REPAIR PROTEIN RECO"/>
    <property type="match status" value="1"/>
</dbReference>
<dbReference type="PANTHER" id="PTHR33991:SF1">
    <property type="entry name" value="DNA REPAIR PROTEIN RECO"/>
    <property type="match status" value="1"/>
</dbReference>
<dbReference type="Pfam" id="PF02565">
    <property type="entry name" value="RecO_C"/>
    <property type="match status" value="1"/>
</dbReference>
<dbReference type="Pfam" id="PF11967">
    <property type="entry name" value="RecO_N"/>
    <property type="match status" value="1"/>
</dbReference>
<dbReference type="SUPFAM" id="SSF57863">
    <property type="entry name" value="ArfGap/RecO-like zinc finger"/>
    <property type="match status" value="1"/>
</dbReference>
<dbReference type="SUPFAM" id="SSF50249">
    <property type="entry name" value="Nucleic acid-binding proteins"/>
    <property type="match status" value="1"/>
</dbReference>
<reference key="1">
    <citation type="submission" date="2007-04" db="EMBL/GenBank/DDBJ databases">
        <title>Genome sequence of the thermophilic hydrogen-producing bacterium Caldicellulosiruptor saccharolyticus DSM 8903.</title>
        <authorList>
            <person name="Copeland A."/>
            <person name="Lucas S."/>
            <person name="Lapidus A."/>
            <person name="Barry K."/>
            <person name="Detter J.C."/>
            <person name="Glavina del Rio T."/>
            <person name="Hammon N."/>
            <person name="Israni S."/>
            <person name="Dalin E."/>
            <person name="Tice H."/>
            <person name="Pitluck S."/>
            <person name="Kiss H."/>
            <person name="Brettin T."/>
            <person name="Bruce D."/>
            <person name="Han C."/>
            <person name="Schmutz J."/>
            <person name="Larimer F."/>
            <person name="Land M."/>
            <person name="Hauser L."/>
            <person name="Kyrpides N."/>
            <person name="Lykidis A."/>
            <person name="van de Werken H.J.G."/>
            <person name="Verhaart M.R.A."/>
            <person name="VanFossen A.L."/>
            <person name="Lewis D.L."/>
            <person name="Nichols J.D."/>
            <person name="Goorissen H.P."/>
            <person name="van Niel E.W.J."/>
            <person name="Stams F.J.M."/>
            <person name="Willquist K.U."/>
            <person name="Ward D.E."/>
            <person name="van der Oost J."/>
            <person name="Kelly R.M."/>
            <person name="Kengen S.M.W."/>
            <person name="Richardson P."/>
        </authorList>
    </citation>
    <scope>NUCLEOTIDE SEQUENCE [LARGE SCALE GENOMIC DNA]</scope>
    <source>
        <strain>ATCC 43494 / DSM 8903 / Tp8T 6331</strain>
    </source>
</reference>
<name>RECO_CALS8</name>
<comment type="function">
    <text evidence="1">Involved in DNA repair and RecF pathway recombination.</text>
</comment>
<comment type="similarity">
    <text evidence="1">Belongs to the RecO family.</text>
</comment>
<gene>
    <name evidence="1" type="primary">recO</name>
    <name type="ordered locus">Csac_1957</name>
</gene>
<proteinExistence type="inferred from homology"/>